<feature type="chain" id="PRO_0000358824" description="Transcription factor bHLH147">
    <location>
        <begin position="1"/>
        <end position="230"/>
    </location>
</feature>
<feature type="domain" description="bHLH" evidence="1">
    <location>
        <begin position="147"/>
        <end position="196"/>
    </location>
</feature>
<feature type="region of interest" description="Disordered" evidence="2">
    <location>
        <begin position="1"/>
        <end position="52"/>
    </location>
</feature>
<feature type="region of interest" description="Disordered" evidence="2">
    <location>
        <begin position="210"/>
        <end position="230"/>
    </location>
</feature>
<feature type="compositionally biased region" description="Polar residues" evidence="2">
    <location>
        <begin position="1"/>
        <end position="17"/>
    </location>
</feature>
<feature type="compositionally biased region" description="Low complexity" evidence="2">
    <location>
        <begin position="33"/>
        <end position="46"/>
    </location>
</feature>
<gene>
    <name type="primary">BHLH147</name>
    <name type="synonym">AIF3</name>
    <name type="synonym">EN142</name>
    <name type="ordered locus">At3g17100</name>
    <name type="ORF">K14A17.17</name>
</gene>
<organism>
    <name type="scientific">Arabidopsis thaliana</name>
    <name type="common">Mouse-ear cress</name>
    <dbReference type="NCBI Taxonomy" id="3702"/>
    <lineage>
        <taxon>Eukaryota</taxon>
        <taxon>Viridiplantae</taxon>
        <taxon>Streptophyta</taxon>
        <taxon>Embryophyta</taxon>
        <taxon>Tracheophyta</taxon>
        <taxon>Spermatophyta</taxon>
        <taxon>Magnoliopsida</taxon>
        <taxon>eudicotyledons</taxon>
        <taxon>Gunneridae</taxon>
        <taxon>Pentapetalae</taxon>
        <taxon>rosids</taxon>
        <taxon>malvids</taxon>
        <taxon>Brassicales</taxon>
        <taxon>Brassicaceae</taxon>
        <taxon>Camelineae</taxon>
        <taxon>Arabidopsis</taxon>
    </lineage>
</organism>
<proteinExistence type="evidence at protein level"/>
<name>BH147_ARATH</name>
<evidence type="ECO:0000255" key="1">
    <source>
        <dbReference type="PROSITE-ProRule" id="PRU00981"/>
    </source>
</evidence>
<evidence type="ECO:0000256" key="2">
    <source>
        <dbReference type="SAM" id="MobiDB-lite"/>
    </source>
</evidence>
<evidence type="ECO:0000269" key="3">
    <source>
    </source>
</evidence>
<evidence type="ECO:0000305" key="4"/>
<comment type="function">
    <text evidence="3">Atypical bHLH transcription factor probably unable to bind DNA. Negatively regulates brassinosteroid signaling.</text>
</comment>
<comment type="subunit">
    <text evidence="3 4">Homodimer (Probable). Interacts with PRE3.</text>
</comment>
<comment type="subcellular location">
    <subcellularLocation>
        <location evidence="1">Nucleus</location>
    </subcellularLocation>
</comment>
<dbReference type="EMBL" id="AB026636">
    <property type="protein sequence ID" value="BAA94988.1"/>
    <property type="molecule type" value="Genomic_DNA"/>
</dbReference>
<dbReference type="EMBL" id="CP002686">
    <property type="protein sequence ID" value="AEE75904.1"/>
    <property type="molecule type" value="Genomic_DNA"/>
</dbReference>
<dbReference type="EMBL" id="CP002686">
    <property type="protein sequence ID" value="AEE75905.1"/>
    <property type="molecule type" value="Genomic_DNA"/>
</dbReference>
<dbReference type="EMBL" id="AY045684">
    <property type="protein sequence ID" value="AAK74042.1"/>
    <property type="molecule type" value="mRNA"/>
</dbReference>
<dbReference type="EMBL" id="AY057736">
    <property type="protein sequence ID" value="AAL15366.1"/>
    <property type="molecule type" value="mRNA"/>
</dbReference>
<dbReference type="EMBL" id="AK230300">
    <property type="protein sequence ID" value="BAF02101.1"/>
    <property type="molecule type" value="mRNA"/>
</dbReference>
<dbReference type="RefSeq" id="NP_566567.1">
    <property type="nucleotide sequence ID" value="NM_112586.3"/>
</dbReference>
<dbReference type="RefSeq" id="NP_850601.1">
    <property type="nucleotide sequence ID" value="NM_180270.3"/>
</dbReference>
<dbReference type="SMR" id="Q9LSN7"/>
<dbReference type="FunCoup" id="Q9LSN7">
    <property type="interactions" value="106"/>
</dbReference>
<dbReference type="IntAct" id="Q9LSN7">
    <property type="interactions" value="1"/>
</dbReference>
<dbReference type="STRING" id="3702.Q9LSN7"/>
<dbReference type="GlyGen" id="Q9LSN7">
    <property type="glycosylation" value="1 site"/>
</dbReference>
<dbReference type="PaxDb" id="3702-AT3G17100.1"/>
<dbReference type="EnsemblPlants" id="AT3G17100.1">
    <property type="protein sequence ID" value="AT3G17100.1"/>
    <property type="gene ID" value="AT3G17100"/>
</dbReference>
<dbReference type="EnsemblPlants" id="AT3G17100.2">
    <property type="protein sequence ID" value="AT3G17100.2"/>
    <property type="gene ID" value="AT3G17100"/>
</dbReference>
<dbReference type="GeneID" id="820967"/>
<dbReference type="Gramene" id="AT3G17100.1">
    <property type="protein sequence ID" value="AT3G17100.1"/>
    <property type="gene ID" value="AT3G17100"/>
</dbReference>
<dbReference type="Gramene" id="AT3G17100.2">
    <property type="protein sequence ID" value="AT3G17100.2"/>
    <property type="gene ID" value="AT3G17100"/>
</dbReference>
<dbReference type="KEGG" id="ath:AT3G17100"/>
<dbReference type="Araport" id="AT3G17100"/>
<dbReference type="TAIR" id="AT3G17100">
    <property type="gene designation" value="AIF3"/>
</dbReference>
<dbReference type="eggNOG" id="ENOG502RY2C">
    <property type="taxonomic scope" value="Eukaryota"/>
</dbReference>
<dbReference type="HOGENOM" id="CLU_090794_0_1_1"/>
<dbReference type="InParanoid" id="Q9LSN7"/>
<dbReference type="OMA" id="MAIENRI"/>
<dbReference type="OrthoDB" id="1647165at2759"/>
<dbReference type="PhylomeDB" id="Q9LSN7"/>
<dbReference type="PRO" id="PR:Q9LSN7"/>
<dbReference type="Proteomes" id="UP000006548">
    <property type="component" value="Chromosome 3"/>
</dbReference>
<dbReference type="ExpressionAtlas" id="Q9LSN7">
    <property type="expression patterns" value="baseline and differential"/>
</dbReference>
<dbReference type="GO" id="GO:0005634">
    <property type="term" value="C:nucleus"/>
    <property type="evidence" value="ECO:0007669"/>
    <property type="project" value="UniProtKB-SubCell"/>
</dbReference>
<dbReference type="GO" id="GO:0003700">
    <property type="term" value="F:DNA-binding transcription factor activity"/>
    <property type="evidence" value="ECO:0000250"/>
    <property type="project" value="TAIR"/>
</dbReference>
<dbReference type="GO" id="GO:0046983">
    <property type="term" value="F:protein dimerization activity"/>
    <property type="evidence" value="ECO:0007669"/>
    <property type="project" value="InterPro"/>
</dbReference>
<dbReference type="GO" id="GO:0000976">
    <property type="term" value="F:transcription cis-regulatory region binding"/>
    <property type="evidence" value="ECO:0000353"/>
    <property type="project" value="TAIR"/>
</dbReference>
<dbReference type="GO" id="GO:0006355">
    <property type="term" value="P:regulation of DNA-templated transcription"/>
    <property type="evidence" value="ECO:0000304"/>
    <property type="project" value="TAIR"/>
</dbReference>
<dbReference type="CDD" id="cd11444">
    <property type="entry name" value="bHLH_AtIBH1_like"/>
    <property type="match status" value="1"/>
</dbReference>
<dbReference type="InterPro" id="IPR044549">
    <property type="entry name" value="bHLH_AtIBH1-like"/>
</dbReference>
<dbReference type="InterPro" id="IPR011598">
    <property type="entry name" value="bHLH_dom"/>
</dbReference>
<dbReference type="InterPro" id="IPR036638">
    <property type="entry name" value="HLH_DNA-bd_sf"/>
</dbReference>
<dbReference type="InterPro" id="IPR044660">
    <property type="entry name" value="IBH1-like"/>
</dbReference>
<dbReference type="PANTHER" id="PTHR33124:SF87">
    <property type="entry name" value="TRANSCRIPTION FACTOR BHLH147"/>
    <property type="match status" value="1"/>
</dbReference>
<dbReference type="PANTHER" id="PTHR33124">
    <property type="entry name" value="TRANSCRIPTION FACTOR IBH1-LIKE 1"/>
    <property type="match status" value="1"/>
</dbReference>
<dbReference type="SUPFAM" id="SSF47459">
    <property type="entry name" value="HLH, helix-loop-helix DNA-binding domain"/>
    <property type="match status" value="1"/>
</dbReference>
<dbReference type="PROSITE" id="PS50888">
    <property type="entry name" value="BHLH"/>
    <property type="match status" value="1"/>
</dbReference>
<keyword id="KW-0238">DNA-binding</keyword>
<keyword id="KW-0539">Nucleus</keyword>
<keyword id="KW-1185">Reference proteome</keyword>
<keyword id="KW-0804">Transcription</keyword>
<keyword id="KW-0805">Transcription regulation</keyword>
<sequence length="230" mass="25311">MESISPVSNQLLQPTTTSSNSDRSRRKRKKKSSPSSVEKSPSPSISLEKWRSEKQQQIYSTKLVHALRELRISQQPSSSSSSSIPRGGRAVREVADRALAVAARGKTLWSRAILSKAVKLKFRKHKRQRISNPTTTTLTTGSIRSKKQRATVLRLKAKGLPAVQRKVKVLSRLVPGCRKQSLPVVLEETTDYIAAMEMQIRTMTAILSAVSSSPPPPTPGHEGGQTHMLG</sequence>
<protein>
    <recommendedName>
        <fullName>Transcription factor bHLH147</fullName>
    </recommendedName>
    <alternativeName>
        <fullName>ATBS1 interacting factor 3</fullName>
    </alternativeName>
    <alternativeName>
        <fullName>Basic helix-loop-helix protein 147</fullName>
        <shortName>AtbHLH147</shortName>
        <shortName>bHLH 147</shortName>
    </alternativeName>
    <alternativeName>
        <fullName>Transcription factor EN 142</fullName>
    </alternativeName>
    <alternativeName>
        <fullName>bHLH transcription factor bHLH147</fullName>
    </alternativeName>
</protein>
<reference key="1">
    <citation type="journal article" date="2000" name="DNA Res.">
        <title>Structural analysis of Arabidopsis thaliana chromosome 3. I. Sequence features of the regions of 4,504,864 bp covered by sixty P1 and TAC clones.</title>
        <authorList>
            <person name="Sato S."/>
            <person name="Nakamura Y."/>
            <person name="Kaneko T."/>
            <person name="Katoh T."/>
            <person name="Asamizu E."/>
            <person name="Tabata S."/>
        </authorList>
    </citation>
    <scope>NUCLEOTIDE SEQUENCE [LARGE SCALE GENOMIC DNA]</scope>
    <source>
        <strain>cv. Columbia</strain>
    </source>
</reference>
<reference key="2">
    <citation type="journal article" date="2017" name="Plant J.">
        <title>Araport11: a complete reannotation of the Arabidopsis thaliana reference genome.</title>
        <authorList>
            <person name="Cheng C.Y."/>
            <person name="Krishnakumar V."/>
            <person name="Chan A.P."/>
            <person name="Thibaud-Nissen F."/>
            <person name="Schobel S."/>
            <person name="Town C.D."/>
        </authorList>
    </citation>
    <scope>GENOME REANNOTATION</scope>
    <source>
        <strain>cv. Columbia</strain>
    </source>
</reference>
<reference key="3">
    <citation type="journal article" date="2003" name="Science">
        <title>Empirical analysis of transcriptional activity in the Arabidopsis genome.</title>
        <authorList>
            <person name="Yamada K."/>
            <person name="Lim J."/>
            <person name="Dale J.M."/>
            <person name="Chen H."/>
            <person name="Shinn P."/>
            <person name="Palm C.J."/>
            <person name="Southwick A.M."/>
            <person name="Wu H.C."/>
            <person name="Kim C.J."/>
            <person name="Nguyen M."/>
            <person name="Pham P.K."/>
            <person name="Cheuk R.F."/>
            <person name="Karlin-Newmann G."/>
            <person name="Liu S.X."/>
            <person name="Lam B."/>
            <person name="Sakano H."/>
            <person name="Wu T."/>
            <person name="Yu G."/>
            <person name="Miranda M."/>
            <person name="Quach H.L."/>
            <person name="Tripp M."/>
            <person name="Chang C.H."/>
            <person name="Lee J.M."/>
            <person name="Toriumi M.J."/>
            <person name="Chan M.M."/>
            <person name="Tang C.C."/>
            <person name="Onodera C.S."/>
            <person name="Deng J.M."/>
            <person name="Akiyama K."/>
            <person name="Ansari Y."/>
            <person name="Arakawa T."/>
            <person name="Banh J."/>
            <person name="Banno F."/>
            <person name="Bowser L."/>
            <person name="Brooks S.Y."/>
            <person name="Carninci P."/>
            <person name="Chao Q."/>
            <person name="Choy N."/>
            <person name="Enju A."/>
            <person name="Goldsmith A.D."/>
            <person name="Gurjal M."/>
            <person name="Hansen N.F."/>
            <person name="Hayashizaki Y."/>
            <person name="Johnson-Hopson C."/>
            <person name="Hsuan V.W."/>
            <person name="Iida K."/>
            <person name="Karnes M."/>
            <person name="Khan S."/>
            <person name="Koesema E."/>
            <person name="Ishida J."/>
            <person name="Jiang P.X."/>
            <person name="Jones T."/>
            <person name="Kawai J."/>
            <person name="Kamiya A."/>
            <person name="Meyers C."/>
            <person name="Nakajima M."/>
            <person name="Narusaka M."/>
            <person name="Seki M."/>
            <person name="Sakurai T."/>
            <person name="Satou M."/>
            <person name="Tamse R."/>
            <person name="Vaysberg M."/>
            <person name="Wallender E.K."/>
            <person name="Wong C."/>
            <person name="Yamamura Y."/>
            <person name="Yuan S."/>
            <person name="Shinozaki K."/>
            <person name="Davis R.W."/>
            <person name="Theologis A."/>
            <person name="Ecker J.R."/>
        </authorList>
    </citation>
    <scope>NUCLEOTIDE SEQUENCE [LARGE SCALE MRNA]</scope>
    <source>
        <strain>cv. Columbia</strain>
    </source>
</reference>
<reference key="4">
    <citation type="submission" date="2006-07" db="EMBL/GenBank/DDBJ databases">
        <title>Large-scale analysis of RIKEN Arabidopsis full-length (RAFL) cDNAs.</title>
        <authorList>
            <person name="Totoki Y."/>
            <person name="Seki M."/>
            <person name="Ishida J."/>
            <person name="Nakajima M."/>
            <person name="Enju A."/>
            <person name="Kamiya A."/>
            <person name="Narusaka M."/>
            <person name="Shin-i T."/>
            <person name="Nakagawa M."/>
            <person name="Sakamoto N."/>
            <person name="Oishi K."/>
            <person name="Kohara Y."/>
            <person name="Kobayashi M."/>
            <person name="Toyoda A."/>
            <person name="Sakaki Y."/>
            <person name="Sakurai T."/>
            <person name="Iida K."/>
            <person name="Akiyama K."/>
            <person name="Satou M."/>
            <person name="Toyoda T."/>
            <person name="Konagaya A."/>
            <person name="Carninci P."/>
            <person name="Kawai J."/>
            <person name="Hayashizaki Y."/>
            <person name="Shinozaki K."/>
        </authorList>
    </citation>
    <scope>NUCLEOTIDE SEQUENCE [LARGE SCALE MRNA]</scope>
    <source>
        <strain>cv. Columbia</strain>
    </source>
</reference>
<reference key="5">
    <citation type="journal article" date="2003" name="Plant Cell">
        <title>The Arabidopsis basic/helix-loop-helix transcription factor family.</title>
        <authorList>
            <person name="Toledo-Ortiz G."/>
            <person name="Huq E."/>
            <person name="Quail P.H."/>
        </authorList>
    </citation>
    <scope>GENE FAMILY</scope>
    <scope>NOMENCLATURE</scope>
</reference>
<reference key="6">
    <citation type="journal article" date="2003" name="Plant Cell">
        <title>Update on the basic helix-loop-helix transcription factor gene family in Arabidopsis thaliana.</title>
        <authorList>
            <person name="Bailey P.C."/>
            <person name="Martin C."/>
            <person name="Toledo-Ortiz G."/>
            <person name="Quail P.H."/>
            <person name="Huq E."/>
            <person name="Heim M.A."/>
            <person name="Jakoby M."/>
            <person name="Werber M."/>
            <person name="Weisshaar B."/>
        </authorList>
    </citation>
    <scope>GENE FAMILY</scope>
    <scope>NOMENCLATURE</scope>
</reference>
<reference key="7">
    <citation type="journal article" date="2009" name="Plant Cell">
        <title>Regulation of Arabidopsis brassinosteroid signaling by atypical basic helix-loop-helix proteins.</title>
        <authorList>
            <person name="Wang H."/>
            <person name="Zhu Y."/>
            <person name="Fujioka S."/>
            <person name="Asami T."/>
            <person name="Li J."/>
            <person name="Li J."/>
        </authorList>
    </citation>
    <scope>FUNCTION</scope>
    <scope>INTERACTION WITH PRE3</scope>
    <source>
        <strain>cv. Columbia</strain>
    </source>
</reference>
<accession>Q9LSN7</accession>